<sequence>MSSLIKEIEEAWQIKGQLLQDSSKLIMLKKTLNDVIASLNQGAIRVCEKKENSWEVNEWVKKAILLYFITTESQLYNNNYNSWYDKVAPKFSVDTDENIFKEAAIRKVPGAVVRTGTYIAKNVVIMPSFINIGAYIDEGTMIDTWATIGSCAQIGKHCHISGGTGIGGVLEPLQAKPVIIEDNCFIGARSEIAEGVIVEEGAVISMGVFIGSSTKIIYRDTGEIIYGRIPAYSVVVPGVLPAKEAGKPGLYCAVIIKQVDKTTRSKVSINDLLR</sequence>
<evidence type="ECO:0000255" key="1">
    <source>
        <dbReference type="HAMAP-Rule" id="MF_00811"/>
    </source>
</evidence>
<feature type="chain" id="PRO_1000047177" description="2,3,4,5-tetrahydropyridine-2,6-dicarboxylate N-succinyltransferase">
    <location>
        <begin position="1"/>
        <end position="274"/>
    </location>
</feature>
<feature type="binding site" evidence="1">
    <location>
        <position position="106"/>
    </location>
    <ligand>
        <name>substrate</name>
    </ligand>
</feature>
<feature type="binding site" evidence="1">
    <location>
        <position position="143"/>
    </location>
    <ligand>
        <name>substrate</name>
    </ligand>
</feature>
<gene>
    <name evidence="1" type="primary">dapD</name>
    <name type="ordered locus">A1C_01385</name>
</gene>
<organism>
    <name type="scientific">Rickettsia akari (strain Hartford)</name>
    <dbReference type="NCBI Taxonomy" id="293614"/>
    <lineage>
        <taxon>Bacteria</taxon>
        <taxon>Pseudomonadati</taxon>
        <taxon>Pseudomonadota</taxon>
        <taxon>Alphaproteobacteria</taxon>
        <taxon>Rickettsiales</taxon>
        <taxon>Rickettsiaceae</taxon>
        <taxon>Rickettsieae</taxon>
        <taxon>Rickettsia</taxon>
        <taxon>spotted fever group</taxon>
    </lineage>
</organism>
<keyword id="KW-0012">Acyltransferase</keyword>
<keyword id="KW-0028">Amino-acid biosynthesis</keyword>
<keyword id="KW-0963">Cytoplasm</keyword>
<keyword id="KW-0220">Diaminopimelate biosynthesis</keyword>
<keyword id="KW-0457">Lysine biosynthesis</keyword>
<keyword id="KW-0677">Repeat</keyword>
<keyword id="KW-0808">Transferase</keyword>
<accession>A8GMH0</accession>
<comment type="catalytic activity">
    <reaction evidence="1">
        <text>(S)-2,3,4,5-tetrahydrodipicolinate + succinyl-CoA + H2O = (S)-2-succinylamino-6-oxoheptanedioate + CoA</text>
        <dbReference type="Rhea" id="RHEA:17325"/>
        <dbReference type="ChEBI" id="CHEBI:15377"/>
        <dbReference type="ChEBI" id="CHEBI:15685"/>
        <dbReference type="ChEBI" id="CHEBI:16845"/>
        <dbReference type="ChEBI" id="CHEBI:57287"/>
        <dbReference type="ChEBI" id="CHEBI:57292"/>
        <dbReference type="EC" id="2.3.1.117"/>
    </reaction>
</comment>
<comment type="pathway">
    <text evidence="1">Amino-acid biosynthesis; L-lysine biosynthesis via DAP pathway; LL-2,6-diaminopimelate from (S)-tetrahydrodipicolinate (succinylase route): step 1/3.</text>
</comment>
<comment type="subunit">
    <text evidence="1">Homotrimer.</text>
</comment>
<comment type="subcellular location">
    <subcellularLocation>
        <location evidence="1">Cytoplasm</location>
    </subcellularLocation>
</comment>
<comment type="similarity">
    <text evidence="1">Belongs to the transferase hexapeptide repeat family.</text>
</comment>
<dbReference type="EC" id="2.3.1.117" evidence="1"/>
<dbReference type="EMBL" id="CP000847">
    <property type="protein sequence ID" value="ABV74595.1"/>
    <property type="molecule type" value="Genomic_DNA"/>
</dbReference>
<dbReference type="RefSeq" id="WP_012013465.1">
    <property type="nucleotide sequence ID" value="NC_009881.1"/>
</dbReference>
<dbReference type="SMR" id="A8GMH0"/>
<dbReference type="STRING" id="293614.A1C_01385"/>
<dbReference type="KEGG" id="rak:A1C_01385"/>
<dbReference type="eggNOG" id="COG2171">
    <property type="taxonomic scope" value="Bacteria"/>
</dbReference>
<dbReference type="HOGENOM" id="CLU_050859_0_1_5"/>
<dbReference type="UniPathway" id="UPA00034">
    <property type="reaction ID" value="UER00019"/>
</dbReference>
<dbReference type="Proteomes" id="UP000006830">
    <property type="component" value="Chromosome"/>
</dbReference>
<dbReference type="GO" id="GO:0005737">
    <property type="term" value="C:cytoplasm"/>
    <property type="evidence" value="ECO:0007669"/>
    <property type="project" value="UniProtKB-SubCell"/>
</dbReference>
<dbReference type="GO" id="GO:0008666">
    <property type="term" value="F:2,3,4,5-tetrahydropyridine-2,6-dicarboxylate N-succinyltransferase activity"/>
    <property type="evidence" value="ECO:0007669"/>
    <property type="project" value="UniProtKB-UniRule"/>
</dbReference>
<dbReference type="GO" id="GO:0019877">
    <property type="term" value="P:diaminopimelate biosynthetic process"/>
    <property type="evidence" value="ECO:0007669"/>
    <property type="project" value="UniProtKB-UniRule"/>
</dbReference>
<dbReference type="GO" id="GO:0009089">
    <property type="term" value="P:lysine biosynthetic process via diaminopimelate"/>
    <property type="evidence" value="ECO:0007669"/>
    <property type="project" value="UniProtKB-UniRule"/>
</dbReference>
<dbReference type="CDD" id="cd03350">
    <property type="entry name" value="LbH_THP_succinylT"/>
    <property type="match status" value="1"/>
</dbReference>
<dbReference type="Gene3D" id="2.160.10.10">
    <property type="entry name" value="Hexapeptide repeat proteins"/>
    <property type="match status" value="1"/>
</dbReference>
<dbReference type="Gene3D" id="1.10.166.10">
    <property type="entry name" value="Tetrahydrodipicolinate-N-succinyltransferase, N-terminal domain"/>
    <property type="match status" value="1"/>
</dbReference>
<dbReference type="HAMAP" id="MF_00811">
    <property type="entry name" value="DapD"/>
    <property type="match status" value="1"/>
</dbReference>
<dbReference type="InterPro" id="IPR005664">
    <property type="entry name" value="DapD_Trfase_Hexpep_rpt_fam"/>
</dbReference>
<dbReference type="InterPro" id="IPR001451">
    <property type="entry name" value="Hexapep"/>
</dbReference>
<dbReference type="InterPro" id="IPR023180">
    <property type="entry name" value="THP_succinylTrfase_dom1"/>
</dbReference>
<dbReference type="InterPro" id="IPR037133">
    <property type="entry name" value="THP_succinylTrfase_N_sf"/>
</dbReference>
<dbReference type="InterPro" id="IPR050179">
    <property type="entry name" value="Trans_hexapeptide_repeat"/>
</dbReference>
<dbReference type="InterPro" id="IPR011004">
    <property type="entry name" value="Trimer_LpxA-like_sf"/>
</dbReference>
<dbReference type="NCBIfam" id="TIGR00965">
    <property type="entry name" value="dapD"/>
    <property type="match status" value="1"/>
</dbReference>
<dbReference type="NCBIfam" id="NF008808">
    <property type="entry name" value="PRK11830.1"/>
    <property type="match status" value="1"/>
</dbReference>
<dbReference type="PANTHER" id="PTHR43300:SF10">
    <property type="entry name" value="2,3,4,5-TETRAHYDROPYRIDINE-2,6-DICARBOXYLATE N-ACETYLTRANSFERASE"/>
    <property type="match status" value="1"/>
</dbReference>
<dbReference type="PANTHER" id="PTHR43300">
    <property type="entry name" value="ACETYLTRANSFERASE"/>
    <property type="match status" value="1"/>
</dbReference>
<dbReference type="Pfam" id="PF14602">
    <property type="entry name" value="Hexapep_2"/>
    <property type="match status" value="1"/>
</dbReference>
<dbReference type="Pfam" id="PF14805">
    <property type="entry name" value="THDPS_N_2"/>
    <property type="match status" value="1"/>
</dbReference>
<dbReference type="SUPFAM" id="SSF51161">
    <property type="entry name" value="Trimeric LpxA-like enzymes"/>
    <property type="match status" value="1"/>
</dbReference>
<name>DAPD_RICAH</name>
<protein>
    <recommendedName>
        <fullName evidence="1">2,3,4,5-tetrahydropyridine-2,6-dicarboxylate N-succinyltransferase</fullName>
        <ecNumber evidence="1">2.3.1.117</ecNumber>
    </recommendedName>
    <alternativeName>
        <fullName evidence="1">Tetrahydrodipicolinate N-succinyltransferase</fullName>
        <shortName evidence="1">THDP succinyltransferase</shortName>
        <shortName evidence="1">THP succinyltransferase</shortName>
        <shortName evidence="1">Tetrahydropicolinate succinylase</shortName>
    </alternativeName>
</protein>
<proteinExistence type="inferred from homology"/>
<reference key="1">
    <citation type="submission" date="2007-09" db="EMBL/GenBank/DDBJ databases">
        <title>Complete genome sequence of Rickettsia akari.</title>
        <authorList>
            <person name="Madan A."/>
            <person name="Fahey J."/>
            <person name="Helton E."/>
            <person name="Ketteman M."/>
            <person name="Madan A."/>
            <person name="Rodrigues S."/>
            <person name="Sanchez A."/>
            <person name="Whiting M."/>
            <person name="Dasch G."/>
            <person name="Eremeeva M."/>
        </authorList>
    </citation>
    <scope>NUCLEOTIDE SEQUENCE [LARGE SCALE GENOMIC DNA]</scope>
    <source>
        <strain>Hartford</strain>
    </source>
</reference>